<accession>Q0JKM9</accession>
<accession>Q8LR27</accession>
<dbReference type="EC" id="3.2.1.78"/>
<dbReference type="EMBL" id="AP003284">
    <property type="protein sequence ID" value="BAB91747.1"/>
    <property type="molecule type" value="Genomic_DNA"/>
</dbReference>
<dbReference type="EMBL" id="AP008207">
    <property type="protein sequence ID" value="BAF05699.1"/>
    <property type="molecule type" value="Genomic_DNA"/>
</dbReference>
<dbReference type="EMBL" id="AP014957">
    <property type="protein sequence ID" value="BAS73552.1"/>
    <property type="molecule type" value="Genomic_DNA"/>
</dbReference>
<dbReference type="EMBL" id="AK071667">
    <property type="status" value="NOT_ANNOTATED_CDS"/>
    <property type="molecule type" value="mRNA"/>
</dbReference>
<dbReference type="SMR" id="Q0JKM9"/>
<dbReference type="FunCoup" id="Q0JKM9">
    <property type="interactions" value="113"/>
</dbReference>
<dbReference type="STRING" id="39947.Q0JKM9"/>
<dbReference type="CAZy" id="GH5">
    <property type="family name" value="Glycoside Hydrolase Family 5"/>
</dbReference>
<dbReference type="PaxDb" id="39947-Q0JKM9"/>
<dbReference type="KEGG" id="dosa:Os01g0663300"/>
<dbReference type="eggNOG" id="ENOG502QS4Q">
    <property type="taxonomic scope" value="Eukaryota"/>
</dbReference>
<dbReference type="InParanoid" id="Q0JKM9"/>
<dbReference type="OMA" id="TPQPFRM"/>
<dbReference type="Proteomes" id="UP000000763">
    <property type="component" value="Chromosome 1"/>
</dbReference>
<dbReference type="Proteomes" id="UP000059680">
    <property type="component" value="Chromosome 1"/>
</dbReference>
<dbReference type="GO" id="GO:0005576">
    <property type="term" value="C:extracellular region"/>
    <property type="evidence" value="ECO:0007669"/>
    <property type="project" value="UniProtKB-SubCell"/>
</dbReference>
<dbReference type="GO" id="GO:0016985">
    <property type="term" value="F:mannan endo-1,4-beta-mannosidase activity"/>
    <property type="evidence" value="ECO:0000318"/>
    <property type="project" value="GO_Central"/>
</dbReference>
<dbReference type="GO" id="GO:0000272">
    <property type="term" value="P:polysaccharide catabolic process"/>
    <property type="evidence" value="ECO:0007669"/>
    <property type="project" value="InterPro"/>
</dbReference>
<dbReference type="FunFam" id="3.20.20.80:FF:000012">
    <property type="entry name" value="Mannan endo-1,4-beta-mannosidase 6"/>
    <property type="match status" value="1"/>
</dbReference>
<dbReference type="Gene3D" id="3.20.20.80">
    <property type="entry name" value="Glycosidases"/>
    <property type="match status" value="1"/>
</dbReference>
<dbReference type="InterPro" id="IPR001547">
    <property type="entry name" value="Glyco_hydro_5"/>
</dbReference>
<dbReference type="InterPro" id="IPR018087">
    <property type="entry name" value="Glyco_hydro_5_CS"/>
</dbReference>
<dbReference type="InterPro" id="IPR017853">
    <property type="entry name" value="Glycoside_hydrolase_SF"/>
</dbReference>
<dbReference type="InterPro" id="IPR045053">
    <property type="entry name" value="MAN-like"/>
</dbReference>
<dbReference type="PANTHER" id="PTHR31451">
    <property type="match status" value="1"/>
</dbReference>
<dbReference type="PANTHER" id="PTHR31451:SF60">
    <property type="entry name" value="MANNAN ENDO-1,4-BETA-MANNOSIDASE 1"/>
    <property type="match status" value="1"/>
</dbReference>
<dbReference type="Pfam" id="PF00150">
    <property type="entry name" value="Cellulase"/>
    <property type="match status" value="1"/>
</dbReference>
<dbReference type="SUPFAM" id="SSF51445">
    <property type="entry name" value="(Trans)glycosidases"/>
    <property type="match status" value="1"/>
</dbReference>
<dbReference type="PROSITE" id="PS00659">
    <property type="entry name" value="GLYCOSYL_HYDROL_F5"/>
    <property type="match status" value="1"/>
</dbReference>
<sequence length="432" mass="46875">MRLLGAHRAALLVLACVVVVVIHGLGEAEALGGGGGFVRAQGTRFVLDGNPYYANGFNAYWLMLLAADPSQRGKVSAALGEAAGHGLTVARTWAFSDGGGGNALQLSPGNYNENTFKGLDFVLSEARKYGIKVILSLVDNYDSFGGRKQYVNWARAQGQGIGSDDEFFTNPVVKGFYKNHVKTVLTRKNTITGVAYRDDPTILAWELMNEPRCQSDLSGRTVQSWITEMAAHVKSIDRNHMLEVGLEGFYGASSPSRIAAVNPSGYQLGTDFIANNQVPGIDFATVHSYPDQWLSGKDDQAQLGFMGRWLDAHIADAQAVLRKPLLIAEFGKSWKDPGYSSGQRDALYGTVYAKIYESARRGGATVGGLFWQLLVPGMDSYRDGYEVVFGETPSTTGVITTNSRRLRFLSKAFARARQAQPARGKGRHNGGK</sequence>
<organism>
    <name type="scientific">Oryza sativa subsp. japonica</name>
    <name type="common">Rice</name>
    <dbReference type="NCBI Taxonomy" id="39947"/>
    <lineage>
        <taxon>Eukaryota</taxon>
        <taxon>Viridiplantae</taxon>
        <taxon>Streptophyta</taxon>
        <taxon>Embryophyta</taxon>
        <taxon>Tracheophyta</taxon>
        <taxon>Spermatophyta</taxon>
        <taxon>Magnoliopsida</taxon>
        <taxon>Liliopsida</taxon>
        <taxon>Poales</taxon>
        <taxon>Poaceae</taxon>
        <taxon>BOP clade</taxon>
        <taxon>Oryzoideae</taxon>
        <taxon>Oryzeae</taxon>
        <taxon>Oryzinae</taxon>
        <taxon>Oryza</taxon>
        <taxon>Oryza sativa</taxon>
    </lineage>
</organism>
<protein>
    <recommendedName>
        <fullName>Mannan endo-1,4-beta-mannosidase 1</fullName>
        <ecNumber>3.2.1.78</ecNumber>
    </recommendedName>
    <alternativeName>
        <fullName>Beta-mannanase 1</fullName>
    </alternativeName>
    <alternativeName>
        <fullName>Endo-beta-1,4-mannanase 1</fullName>
    </alternativeName>
    <alternativeName>
        <fullName>OsMAN1</fullName>
    </alternativeName>
</protein>
<comment type="catalytic activity">
    <reaction>
        <text>Random hydrolysis of (1-&gt;4)-beta-D-mannosidic linkages in mannans, galactomannans and glucomannans.</text>
        <dbReference type="EC" id="3.2.1.78"/>
    </reaction>
</comment>
<comment type="subcellular location">
    <subcellularLocation>
        <location evidence="6">Secreted</location>
    </subcellularLocation>
</comment>
<comment type="alternative products">
    <event type="alternative splicing"/>
    <isoform>
        <id>Q0JKM9-1</id>
        <name>1</name>
        <sequence type="displayed"/>
    </isoform>
    <isoform>
        <id>Q0JKM9-2</id>
        <name>2</name>
        <sequence type="described" ref="VSP_023020"/>
    </isoform>
</comment>
<comment type="tissue specificity">
    <text evidence="4">Ubiquitous.</text>
</comment>
<comment type="similarity">
    <text evidence="6">Belongs to the glycosyl hydrolase 5 (cellulase A) family.</text>
</comment>
<evidence type="ECO:0000250" key="1">
    <source>
        <dbReference type="UniProtKB" id="B4XC07"/>
    </source>
</evidence>
<evidence type="ECO:0000250" key="2">
    <source>
        <dbReference type="UniProtKB" id="Q99036"/>
    </source>
</evidence>
<evidence type="ECO:0000255" key="3"/>
<evidence type="ECO:0000269" key="4">
    <source>
    </source>
</evidence>
<evidence type="ECO:0000303" key="5">
    <source>
    </source>
</evidence>
<evidence type="ECO:0000305" key="6"/>
<keyword id="KW-0025">Alternative splicing</keyword>
<keyword id="KW-0326">Glycosidase</keyword>
<keyword id="KW-0378">Hydrolase</keyword>
<keyword id="KW-1185">Reference proteome</keyword>
<keyword id="KW-0964">Secreted</keyword>
<keyword id="KW-0732">Signal</keyword>
<name>MAN1_ORYSJ</name>
<proteinExistence type="evidence at transcript level"/>
<reference key="1">
    <citation type="journal article" date="2002" name="Nature">
        <title>The genome sequence and structure of rice chromosome 1.</title>
        <authorList>
            <person name="Sasaki T."/>
            <person name="Matsumoto T."/>
            <person name="Yamamoto K."/>
            <person name="Sakata K."/>
            <person name="Baba T."/>
            <person name="Katayose Y."/>
            <person name="Wu J."/>
            <person name="Niimura Y."/>
            <person name="Cheng Z."/>
            <person name="Nagamura Y."/>
            <person name="Antonio B.A."/>
            <person name="Kanamori H."/>
            <person name="Hosokawa S."/>
            <person name="Masukawa M."/>
            <person name="Arikawa K."/>
            <person name="Chiden Y."/>
            <person name="Hayashi M."/>
            <person name="Okamoto M."/>
            <person name="Ando T."/>
            <person name="Aoki H."/>
            <person name="Arita K."/>
            <person name="Hamada M."/>
            <person name="Harada C."/>
            <person name="Hijishita S."/>
            <person name="Honda M."/>
            <person name="Ichikawa Y."/>
            <person name="Idonuma A."/>
            <person name="Iijima M."/>
            <person name="Ikeda M."/>
            <person name="Ikeno M."/>
            <person name="Ito S."/>
            <person name="Ito T."/>
            <person name="Ito Y."/>
            <person name="Ito Y."/>
            <person name="Iwabuchi A."/>
            <person name="Kamiya K."/>
            <person name="Karasawa W."/>
            <person name="Katagiri S."/>
            <person name="Kikuta A."/>
            <person name="Kobayashi N."/>
            <person name="Kono I."/>
            <person name="Machita K."/>
            <person name="Maehara T."/>
            <person name="Mizuno H."/>
            <person name="Mizubayashi T."/>
            <person name="Mukai Y."/>
            <person name="Nagasaki H."/>
            <person name="Nakashima M."/>
            <person name="Nakama Y."/>
            <person name="Nakamichi Y."/>
            <person name="Nakamura M."/>
            <person name="Namiki N."/>
            <person name="Negishi M."/>
            <person name="Ohta I."/>
            <person name="Ono N."/>
            <person name="Saji S."/>
            <person name="Sakai K."/>
            <person name="Shibata M."/>
            <person name="Shimokawa T."/>
            <person name="Shomura A."/>
            <person name="Song J."/>
            <person name="Takazaki Y."/>
            <person name="Terasawa K."/>
            <person name="Tsuji K."/>
            <person name="Waki K."/>
            <person name="Yamagata H."/>
            <person name="Yamane H."/>
            <person name="Yoshiki S."/>
            <person name="Yoshihara R."/>
            <person name="Yukawa K."/>
            <person name="Zhong H."/>
            <person name="Iwama H."/>
            <person name="Endo T."/>
            <person name="Ito H."/>
            <person name="Hahn J.H."/>
            <person name="Kim H.-I."/>
            <person name="Eun M.-Y."/>
            <person name="Yano M."/>
            <person name="Jiang J."/>
            <person name="Gojobori T."/>
        </authorList>
    </citation>
    <scope>NUCLEOTIDE SEQUENCE [LARGE SCALE GENOMIC DNA]</scope>
    <source>
        <strain>cv. Nipponbare</strain>
    </source>
</reference>
<reference key="2">
    <citation type="journal article" date="2005" name="Nature">
        <title>The map-based sequence of the rice genome.</title>
        <authorList>
            <consortium name="International rice genome sequencing project (IRGSP)"/>
        </authorList>
    </citation>
    <scope>NUCLEOTIDE SEQUENCE [LARGE SCALE GENOMIC DNA]</scope>
    <source>
        <strain>cv. Nipponbare</strain>
    </source>
</reference>
<reference key="3">
    <citation type="journal article" date="2008" name="Nucleic Acids Res.">
        <title>The rice annotation project database (RAP-DB): 2008 update.</title>
        <authorList>
            <consortium name="The rice annotation project (RAP)"/>
        </authorList>
    </citation>
    <scope>GENOME REANNOTATION</scope>
    <source>
        <strain>cv. Nipponbare</strain>
    </source>
</reference>
<reference key="4">
    <citation type="journal article" date="2013" name="Rice">
        <title>Improvement of the Oryza sativa Nipponbare reference genome using next generation sequence and optical map data.</title>
        <authorList>
            <person name="Kawahara Y."/>
            <person name="de la Bastide M."/>
            <person name="Hamilton J.P."/>
            <person name="Kanamori H."/>
            <person name="McCombie W.R."/>
            <person name="Ouyang S."/>
            <person name="Schwartz D.C."/>
            <person name="Tanaka T."/>
            <person name="Wu J."/>
            <person name="Zhou S."/>
            <person name="Childs K.L."/>
            <person name="Davidson R.M."/>
            <person name="Lin H."/>
            <person name="Quesada-Ocampo L."/>
            <person name="Vaillancourt B."/>
            <person name="Sakai H."/>
            <person name="Lee S.S."/>
            <person name="Kim J."/>
            <person name="Numa H."/>
            <person name="Itoh T."/>
            <person name="Buell C.R."/>
            <person name="Matsumoto T."/>
        </authorList>
    </citation>
    <scope>GENOME REANNOTATION</scope>
    <source>
        <strain>cv. Nipponbare</strain>
    </source>
</reference>
<reference key="5">
    <citation type="journal article" date="2003" name="Science">
        <title>Collection, mapping, and annotation of over 28,000 cDNA clones from japonica rice.</title>
        <authorList>
            <consortium name="The rice full-length cDNA consortium"/>
        </authorList>
    </citation>
    <scope>NUCLEOTIDE SEQUENCE [LARGE SCALE MRNA] (ISOFORM 2)</scope>
    <source>
        <strain>cv. Nipponbare</strain>
    </source>
</reference>
<reference key="6">
    <citation type="journal article" date="2007" name="Funct. Integr. Genomics">
        <title>The endo-beta-mannanase gene families in Arabidopsis, rice, and poplar.</title>
        <authorList>
            <person name="Yuan J.S."/>
            <person name="Yang X."/>
            <person name="Lai J."/>
            <person name="Lin H."/>
            <person name="Cheng Z.-M."/>
            <person name="Nonogaki H."/>
            <person name="Chen F."/>
        </authorList>
    </citation>
    <scope>GENE FAMILY</scope>
    <scope>TISSUE SPECIFICITY</scope>
</reference>
<gene>
    <name type="primary">MAN1</name>
    <name type="ordered locus">Os01g0663300</name>
    <name type="ordered locus">LOC_Os01g47400</name>
    <name type="ORF">P0671D01.40</name>
</gene>
<feature type="signal peptide" evidence="3">
    <location>
        <begin position="1"/>
        <end position="28"/>
    </location>
</feature>
<feature type="chain" id="PRO_0000277482" description="Mannan endo-1,4-beta-mannosidase 1">
    <location>
        <begin position="29"/>
        <end position="432"/>
    </location>
</feature>
<feature type="active site" description="Proton donor" evidence="2">
    <location>
        <position position="210"/>
    </location>
</feature>
<feature type="active site" description="Nucleophile" evidence="2">
    <location>
        <position position="329"/>
    </location>
</feature>
<feature type="binding site" evidence="1">
    <location>
        <position position="93"/>
    </location>
    <ligand>
        <name>substrate</name>
    </ligand>
</feature>
<feature type="binding site" evidence="1">
    <location>
        <position position="209"/>
    </location>
    <ligand>
        <name>substrate</name>
    </ligand>
</feature>
<feature type="binding site" evidence="1">
    <location>
        <position position="289"/>
    </location>
    <ligand>
        <name>substrate</name>
    </ligand>
</feature>
<feature type="binding site" evidence="1">
    <location>
        <position position="371"/>
    </location>
    <ligand>
        <name>substrate</name>
    </ligand>
</feature>
<feature type="splice variant" id="VSP_023020" description="In isoform 2." evidence="5">
    <location>
        <begin position="318"/>
        <end position="346"/>
    </location>
</feature>